<dbReference type="EMBL" id="AB005237">
    <property type="protein sequence ID" value="BAB09674.1"/>
    <property type="molecule type" value="Genomic_DNA"/>
</dbReference>
<dbReference type="EMBL" id="CP002688">
    <property type="protein sequence ID" value="AED90926.1"/>
    <property type="molecule type" value="Genomic_DNA"/>
</dbReference>
<dbReference type="EMBL" id="CP002688">
    <property type="protein sequence ID" value="AED90927.1"/>
    <property type="molecule type" value="Genomic_DNA"/>
</dbReference>
<dbReference type="EMBL" id="CP002688">
    <property type="protein sequence ID" value="ANM70740.1"/>
    <property type="molecule type" value="Genomic_DNA"/>
</dbReference>
<dbReference type="EMBL" id="CP002688">
    <property type="protein sequence ID" value="ANM70741.1"/>
    <property type="molecule type" value="Genomic_DNA"/>
</dbReference>
<dbReference type="EMBL" id="CP002688">
    <property type="protein sequence ID" value="ANM70742.1"/>
    <property type="molecule type" value="Genomic_DNA"/>
</dbReference>
<dbReference type="EMBL" id="AK228788">
    <property type="protein sequence ID" value="BAF00685.1"/>
    <property type="molecule type" value="mRNA"/>
</dbReference>
<dbReference type="RefSeq" id="NP_001078536.1">
    <property type="nucleotide sequence ID" value="NM_001085067.2"/>
</dbReference>
<dbReference type="RefSeq" id="NP_001332325.1">
    <property type="nucleotide sequence ID" value="NM_001342838.1"/>
</dbReference>
<dbReference type="RefSeq" id="NP_001332326.1">
    <property type="nucleotide sequence ID" value="NM_001342837.1"/>
</dbReference>
<dbReference type="RefSeq" id="NP_001332327.1">
    <property type="nucleotide sequence ID" value="NM_001342836.1"/>
</dbReference>
<dbReference type="RefSeq" id="NP_196199.1">
    <property type="nucleotide sequence ID" value="NM_120662.3"/>
</dbReference>
<dbReference type="DIP" id="DIP-61515N"/>
<dbReference type="FunCoup" id="Q9FFJ8">
    <property type="interactions" value="1037"/>
</dbReference>
<dbReference type="IntAct" id="Q9FFJ8">
    <property type="interactions" value="1"/>
</dbReference>
<dbReference type="STRING" id="3702.Q9FFJ8"/>
<dbReference type="iPTMnet" id="Q9FFJ8"/>
<dbReference type="PaxDb" id="3702-AT5G05800.2"/>
<dbReference type="ProteomicsDB" id="238494"/>
<dbReference type="EnsemblPlants" id="AT5G05800.1">
    <property type="protein sequence ID" value="AT5G05800.1"/>
    <property type="gene ID" value="AT5G05800"/>
</dbReference>
<dbReference type="EnsemblPlants" id="AT5G05800.2">
    <property type="protein sequence ID" value="AT5G05800.2"/>
    <property type="gene ID" value="AT5G05800"/>
</dbReference>
<dbReference type="EnsemblPlants" id="AT5G05800.3">
    <property type="protein sequence ID" value="AT5G05800.3"/>
    <property type="gene ID" value="AT5G05800"/>
</dbReference>
<dbReference type="EnsemblPlants" id="AT5G05800.4">
    <property type="protein sequence ID" value="AT5G05800.4"/>
    <property type="gene ID" value="AT5G05800"/>
</dbReference>
<dbReference type="EnsemblPlants" id="AT5G05800.5">
    <property type="protein sequence ID" value="AT5G05800.5"/>
    <property type="gene ID" value="AT5G05800"/>
</dbReference>
<dbReference type="GeneID" id="830465"/>
<dbReference type="Gramene" id="AT5G05800.1">
    <property type="protein sequence ID" value="AT5G05800.1"/>
    <property type="gene ID" value="AT5G05800"/>
</dbReference>
<dbReference type="Gramene" id="AT5G05800.2">
    <property type="protein sequence ID" value="AT5G05800.2"/>
    <property type="gene ID" value="AT5G05800"/>
</dbReference>
<dbReference type="Gramene" id="AT5G05800.3">
    <property type="protein sequence ID" value="AT5G05800.3"/>
    <property type="gene ID" value="AT5G05800"/>
</dbReference>
<dbReference type="Gramene" id="AT5G05800.4">
    <property type="protein sequence ID" value="AT5G05800.4"/>
    <property type="gene ID" value="AT5G05800"/>
</dbReference>
<dbReference type="Gramene" id="AT5G05800.5">
    <property type="protein sequence ID" value="AT5G05800.5"/>
    <property type="gene ID" value="AT5G05800"/>
</dbReference>
<dbReference type="KEGG" id="ath:AT5G05800"/>
<dbReference type="Araport" id="AT5G05800"/>
<dbReference type="TAIR" id="AT5G05800"/>
<dbReference type="eggNOG" id="ENOG502QV1X">
    <property type="taxonomic scope" value="Eukaryota"/>
</dbReference>
<dbReference type="HOGENOM" id="CLU_029074_0_0_1"/>
<dbReference type="InParanoid" id="Q9FFJ8"/>
<dbReference type="OMA" id="SWTPAYH"/>
<dbReference type="OrthoDB" id="1910266at2759"/>
<dbReference type="PhylomeDB" id="Q9FFJ8"/>
<dbReference type="PRO" id="PR:Q9FFJ8"/>
<dbReference type="Proteomes" id="UP000006548">
    <property type="component" value="Chromosome 5"/>
</dbReference>
<dbReference type="ExpressionAtlas" id="Q9FFJ8">
    <property type="expression patterns" value="baseline and differential"/>
</dbReference>
<dbReference type="GO" id="GO:0005634">
    <property type="term" value="C:nucleus"/>
    <property type="evidence" value="ECO:0007669"/>
    <property type="project" value="UniProtKB-SubCell"/>
</dbReference>
<dbReference type="InterPro" id="IPR045026">
    <property type="entry name" value="LIMYB"/>
</dbReference>
<dbReference type="InterPro" id="IPR024752">
    <property type="entry name" value="Myb/SANT-like_dom"/>
</dbReference>
<dbReference type="PANTHER" id="PTHR47584">
    <property type="match status" value="1"/>
</dbReference>
<dbReference type="PANTHER" id="PTHR47584:SF17">
    <property type="entry name" value="MYB_SANT-LIKE DNA-BINDING DOMAIN PROTEIN"/>
    <property type="match status" value="1"/>
</dbReference>
<dbReference type="Pfam" id="PF12776">
    <property type="entry name" value="Myb_DNA-bind_3"/>
    <property type="match status" value="2"/>
</dbReference>
<accession>Q9FFJ8</accession>
<name>LIMYB_ARATH</name>
<comment type="function">
    <text evidence="3">Transcriptional repressor that associates with ribosomal protein promoters.</text>
</comment>
<comment type="subunit">
    <text evidence="3">Interacts with RPL10A.</text>
</comment>
<comment type="interaction">
    <interactant intactId="EBI-16146054">
        <id>Q9FFJ8</id>
    </interactant>
    <interactant intactId="EBI-6391356">
        <id>Q93VT9</id>
        <label>RPL10A</label>
    </interactant>
    <organismsDiffer>false</organismsDiffer>
    <experiments>6</experiments>
</comment>
<comment type="subcellular location">
    <subcellularLocation>
        <location evidence="3">Nucleus</location>
    </subcellularLocation>
</comment>
<comment type="tissue specificity">
    <text evidence="3">Expressed in seedlings, leaves, roots, stems and flowers.</text>
</comment>
<comment type="disruption phenotype">
    <text evidence="3">Increased begomovirus infection symptoms. Up-regulation of the ribosomal protein genes.</text>
</comment>
<keyword id="KW-0539">Nucleus</keyword>
<keyword id="KW-1185">Reference proteome</keyword>
<keyword id="KW-0804">Transcription</keyword>
<keyword id="KW-0805">Transcription regulation</keyword>
<reference key="1">
    <citation type="journal article" date="1997" name="DNA Res.">
        <title>Structural analysis of Arabidopsis thaliana chromosome 5. I. Sequence features of the 1.6 Mb regions covered by twenty physically assigned P1 clones.</title>
        <authorList>
            <person name="Sato S."/>
            <person name="Kotani H."/>
            <person name="Nakamura Y."/>
            <person name="Kaneko T."/>
            <person name="Asamizu E."/>
            <person name="Fukami M."/>
            <person name="Miyajima N."/>
            <person name="Tabata S."/>
        </authorList>
    </citation>
    <scope>NUCLEOTIDE SEQUENCE [LARGE SCALE GENOMIC DNA]</scope>
    <source>
        <strain>cv. Columbia</strain>
    </source>
</reference>
<reference key="2">
    <citation type="journal article" date="2017" name="Plant J.">
        <title>Araport11: a complete reannotation of the Arabidopsis thaliana reference genome.</title>
        <authorList>
            <person name="Cheng C.Y."/>
            <person name="Krishnakumar V."/>
            <person name="Chan A.P."/>
            <person name="Thibaud-Nissen F."/>
            <person name="Schobel S."/>
            <person name="Town C.D."/>
        </authorList>
    </citation>
    <scope>GENOME REANNOTATION</scope>
    <source>
        <strain>cv. Columbia</strain>
    </source>
</reference>
<reference key="3">
    <citation type="submission" date="2006-07" db="EMBL/GenBank/DDBJ databases">
        <title>Large-scale analysis of RIKEN Arabidopsis full-length (RAFL) cDNAs.</title>
        <authorList>
            <person name="Totoki Y."/>
            <person name="Seki M."/>
            <person name="Ishida J."/>
            <person name="Nakajima M."/>
            <person name="Enju A."/>
            <person name="Kamiya A."/>
            <person name="Narusaka M."/>
            <person name="Shin-i T."/>
            <person name="Nakagawa M."/>
            <person name="Sakamoto N."/>
            <person name="Oishi K."/>
            <person name="Kohara Y."/>
            <person name="Kobayashi M."/>
            <person name="Toyoda A."/>
            <person name="Sakaki Y."/>
            <person name="Sakurai T."/>
            <person name="Iida K."/>
            <person name="Akiyama K."/>
            <person name="Satou M."/>
            <person name="Toyoda T."/>
            <person name="Konagaya A."/>
            <person name="Carninci P."/>
            <person name="Kawai J."/>
            <person name="Hayashizaki Y."/>
            <person name="Shinozaki K."/>
        </authorList>
    </citation>
    <scope>NUCLEOTIDE SEQUENCE [LARGE SCALE MRNA]</scope>
    <source>
        <strain>cv. Columbia</strain>
    </source>
</reference>
<reference key="4">
    <citation type="journal article" date="2015" name="Nature">
        <title>NIK1-mediated translation suppression functions as a plant antiviral immunity mechanism.</title>
        <authorList>
            <person name="Zorzatto C."/>
            <person name="Machado J.P."/>
            <person name="Lopes K.V."/>
            <person name="Nascimento K.J."/>
            <person name="Pereira W.A."/>
            <person name="Brustolini O.J."/>
            <person name="Reis P.A."/>
            <person name="Calil I.P."/>
            <person name="Deguchi M."/>
            <person name="Sachetto-Martins G."/>
            <person name="Gouveia B.C."/>
            <person name="Loriato V.A."/>
            <person name="Silva M.A."/>
            <person name="Silva F.F."/>
            <person name="Santos A.A."/>
            <person name="Chory J."/>
            <person name="Fontes E.P."/>
        </authorList>
    </citation>
    <scope>FUNCTION</scope>
    <scope>INTERACTION WITH RPL10A</scope>
    <scope>SUBCELLULAR LOCATION</scope>
    <scope>TISSUE SPECIFICITY</scope>
    <scope>DISRUPTION PHENOTYPE</scope>
</reference>
<proteinExistence type="evidence at protein level"/>
<organism evidence="7">
    <name type="scientific">Arabidopsis thaliana</name>
    <name type="common">Mouse-ear cress</name>
    <dbReference type="NCBI Taxonomy" id="3702"/>
    <lineage>
        <taxon>Eukaryota</taxon>
        <taxon>Viridiplantae</taxon>
        <taxon>Streptophyta</taxon>
        <taxon>Embryophyta</taxon>
        <taxon>Tracheophyta</taxon>
        <taxon>Spermatophyta</taxon>
        <taxon>Magnoliopsida</taxon>
        <taxon>eudicotyledons</taxon>
        <taxon>Gunneridae</taxon>
        <taxon>Pentapetalae</taxon>
        <taxon>rosids</taxon>
        <taxon>malvids</taxon>
        <taxon>Brassicales</taxon>
        <taxon>Brassicaceae</taxon>
        <taxon>Camelineae</taxon>
        <taxon>Arabidopsis</taxon>
    </lineage>
</organism>
<evidence type="ECO:0000255" key="1">
    <source>
        <dbReference type="PROSITE-ProRule" id="PRU00133"/>
    </source>
</evidence>
<evidence type="ECO:0000256" key="2">
    <source>
        <dbReference type="SAM" id="MobiDB-lite"/>
    </source>
</evidence>
<evidence type="ECO:0000269" key="3">
    <source>
    </source>
</evidence>
<evidence type="ECO:0000303" key="4">
    <source>
    </source>
</evidence>
<evidence type="ECO:0000312" key="5">
    <source>
        <dbReference type="Araport" id="AT5G05800"/>
    </source>
</evidence>
<evidence type="ECO:0000312" key="6">
    <source>
        <dbReference type="EMBL" id="BAB09674.1"/>
    </source>
</evidence>
<evidence type="ECO:0000312" key="7">
    <source>
        <dbReference type="Proteomes" id="UP000006548"/>
    </source>
</evidence>
<sequence length="449" mass="52690">MRPKAVWEPEYHRVFVDLCVEQTMLGNKPGTHFSKEGWRNILISFQEQTGAMYDRMQLKNHWDTMSRQWKIWRRLVETSFMNWNPESNRFRATDDDWANYLQENPDAGQYRLSVPHDLKKLEILFAGCNVEVKNDEVSGVRKRRRSCYEEEDEDNQSMCSSSNPQTKGYWSPSTHKLFLDLLVQETLKGNRPDTHFNKEGWKTILGTINENTGLGYTRPQLKNHWDCTRKAWKIWCQLVGASSMKWDPESRSFGATEEEWRIYIRENPRAGQFRHKEVPHADQLAIIFNGVIEPGETYTPPSRSRKKLLHNRSESPQWRDTTPLSKMHVDEAETSRQNGCYAESQEDRIDSENAQPLDDMKLMNDVMLQESPVFVEIESAKPMYSIGECIKSLNAIEEVEQGSELYMFALDLFLKREYREIFLELKKPSLRIAWLQRLQSTSFPIPTTT</sequence>
<gene>
    <name evidence="4" type="primary">LIMYB</name>
    <name evidence="5" type="ordered locus">At5g05800</name>
    <name evidence="6" type="ORF">MJJ3.22</name>
</gene>
<feature type="chain" id="PRO_0000433024" description="L10-interacting MYB domain-containing protein">
    <location>
        <begin position="1"/>
        <end position="449"/>
    </location>
</feature>
<feature type="domain" description="Myb-like" evidence="1">
    <location>
        <begin position="162"/>
        <end position="225"/>
    </location>
</feature>
<feature type="region of interest" description="Disordered" evidence="2">
    <location>
        <begin position="297"/>
        <end position="324"/>
    </location>
</feature>
<feature type="compositionally biased region" description="Polar residues" evidence="2">
    <location>
        <begin position="314"/>
        <end position="324"/>
    </location>
</feature>
<protein>
    <recommendedName>
        <fullName evidence="4">L10-interacting MYB domain-containing protein</fullName>
    </recommendedName>
</protein>